<dbReference type="EC" id="2.1.1.-" evidence="1"/>
<dbReference type="EMBL" id="CR543861">
    <property type="protein sequence ID" value="CAG69215.1"/>
    <property type="molecule type" value="Genomic_DNA"/>
</dbReference>
<dbReference type="RefSeq" id="WP_004928415.1">
    <property type="nucleotide sequence ID" value="NC_005966.1"/>
</dbReference>
<dbReference type="SMR" id="Q6F9P9"/>
<dbReference type="STRING" id="202950.GCA_001485005_01551"/>
<dbReference type="GeneID" id="45234751"/>
<dbReference type="KEGG" id="aci:ACIAD2443"/>
<dbReference type="eggNOG" id="COG2264">
    <property type="taxonomic scope" value="Bacteria"/>
</dbReference>
<dbReference type="HOGENOM" id="CLU_049382_4_1_6"/>
<dbReference type="OrthoDB" id="9785995at2"/>
<dbReference type="BioCyc" id="ASP62977:ACIAD_RS11170-MONOMER"/>
<dbReference type="Proteomes" id="UP000000430">
    <property type="component" value="Chromosome"/>
</dbReference>
<dbReference type="GO" id="GO:0005829">
    <property type="term" value="C:cytosol"/>
    <property type="evidence" value="ECO:0007669"/>
    <property type="project" value="TreeGrafter"/>
</dbReference>
<dbReference type="GO" id="GO:0016279">
    <property type="term" value="F:protein-lysine N-methyltransferase activity"/>
    <property type="evidence" value="ECO:0007669"/>
    <property type="project" value="TreeGrafter"/>
</dbReference>
<dbReference type="GO" id="GO:0032259">
    <property type="term" value="P:methylation"/>
    <property type="evidence" value="ECO:0007669"/>
    <property type="project" value="UniProtKB-KW"/>
</dbReference>
<dbReference type="CDD" id="cd02440">
    <property type="entry name" value="AdoMet_MTases"/>
    <property type="match status" value="1"/>
</dbReference>
<dbReference type="Gene3D" id="3.40.50.150">
    <property type="entry name" value="Vaccinia Virus protein VP39"/>
    <property type="match status" value="1"/>
</dbReference>
<dbReference type="HAMAP" id="MF_00735">
    <property type="entry name" value="Methyltr_PrmA"/>
    <property type="match status" value="1"/>
</dbReference>
<dbReference type="InterPro" id="IPR050078">
    <property type="entry name" value="Ribosomal_L11_MeTrfase_PrmA"/>
</dbReference>
<dbReference type="InterPro" id="IPR004498">
    <property type="entry name" value="Ribosomal_PrmA_MeTrfase"/>
</dbReference>
<dbReference type="InterPro" id="IPR029063">
    <property type="entry name" value="SAM-dependent_MTases_sf"/>
</dbReference>
<dbReference type="NCBIfam" id="TIGR00406">
    <property type="entry name" value="prmA"/>
    <property type="match status" value="1"/>
</dbReference>
<dbReference type="PANTHER" id="PTHR43648">
    <property type="entry name" value="ELECTRON TRANSFER FLAVOPROTEIN BETA SUBUNIT LYSINE METHYLTRANSFERASE"/>
    <property type="match status" value="1"/>
</dbReference>
<dbReference type="PANTHER" id="PTHR43648:SF1">
    <property type="entry name" value="ELECTRON TRANSFER FLAVOPROTEIN BETA SUBUNIT LYSINE METHYLTRANSFERASE"/>
    <property type="match status" value="1"/>
</dbReference>
<dbReference type="Pfam" id="PF06325">
    <property type="entry name" value="PrmA"/>
    <property type="match status" value="1"/>
</dbReference>
<dbReference type="PIRSF" id="PIRSF000401">
    <property type="entry name" value="RPL11_MTase"/>
    <property type="match status" value="1"/>
</dbReference>
<dbReference type="SUPFAM" id="SSF53335">
    <property type="entry name" value="S-adenosyl-L-methionine-dependent methyltransferases"/>
    <property type="match status" value="1"/>
</dbReference>
<name>PRMA_ACIAD</name>
<comment type="function">
    <text evidence="1">Methylates ribosomal protein L11.</text>
</comment>
<comment type="catalytic activity">
    <reaction evidence="1">
        <text>L-lysyl-[protein] + 3 S-adenosyl-L-methionine = N(6),N(6),N(6)-trimethyl-L-lysyl-[protein] + 3 S-adenosyl-L-homocysteine + 3 H(+)</text>
        <dbReference type="Rhea" id="RHEA:54192"/>
        <dbReference type="Rhea" id="RHEA-COMP:9752"/>
        <dbReference type="Rhea" id="RHEA-COMP:13826"/>
        <dbReference type="ChEBI" id="CHEBI:15378"/>
        <dbReference type="ChEBI" id="CHEBI:29969"/>
        <dbReference type="ChEBI" id="CHEBI:57856"/>
        <dbReference type="ChEBI" id="CHEBI:59789"/>
        <dbReference type="ChEBI" id="CHEBI:61961"/>
    </reaction>
</comment>
<comment type="subcellular location">
    <subcellularLocation>
        <location evidence="1">Cytoplasm</location>
    </subcellularLocation>
</comment>
<comment type="similarity">
    <text evidence="1">Belongs to the methyltransferase superfamily. PrmA family.</text>
</comment>
<sequence length="303" mass="33989">MKWLQIHITVDQDQVDFTETLLMSLGAVSVTLDDAEDQALLEPLPGETPLWNKVIVTGIYQEDDNDPIDVEKLKAFLQAQLPNIPMRHEQLEDQVWERAWMDYYDPIQIGEKFWIVPEWLEPPEADATNIKLDPGLAFGTGNHASTFLCLQWLGKTDLKDKVVIDYGCGSGILAVAALLLGAQKVYATDIDPQAVLATKQNAELNNVLERLYVGLPEEFNTEFKASGSQADVLVANILASPLMMLAPEFATLIKPQGEFALAGIIEEQVDDVSEVYQQYFDILNIEKREENWCRISGKRHSQA</sequence>
<reference key="1">
    <citation type="journal article" date="2004" name="Nucleic Acids Res.">
        <title>Unique features revealed by the genome sequence of Acinetobacter sp. ADP1, a versatile and naturally transformation competent bacterium.</title>
        <authorList>
            <person name="Barbe V."/>
            <person name="Vallenet D."/>
            <person name="Fonknechten N."/>
            <person name="Kreimeyer A."/>
            <person name="Oztas S."/>
            <person name="Labarre L."/>
            <person name="Cruveiller S."/>
            <person name="Robert C."/>
            <person name="Duprat S."/>
            <person name="Wincker P."/>
            <person name="Ornston L.N."/>
            <person name="Weissenbach J."/>
            <person name="Marliere P."/>
            <person name="Cohen G.N."/>
            <person name="Medigue C."/>
        </authorList>
    </citation>
    <scope>NUCLEOTIDE SEQUENCE [LARGE SCALE GENOMIC DNA]</scope>
    <source>
        <strain>ATCC 33305 / BD413 / ADP1</strain>
    </source>
</reference>
<feature type="chain" id="PRO_0000192227" description="Ribosomal protein L11 methyltransferase">
    <location>
        <begin position="1"/>
        <end position="303"/>
    </location>
</feature>
<feature type="binding site" evidence="1">
    <location>
        <position position="146"/>
    </location>
    <ligand>
        <name>S-adenosyl-L-methionine</name>
        <dbReference type="ChEBI" id="CHEBI:59789"/>
    </ligand>
</feature>
<feature type="binding site" evidence="1">
    <location>
        <position position="167"/>
    </location>
    <ligand>
        <name>S-adenosyl-L-methionine</name>
        <dbReference type="ChEBI" id="CHEBI:59789"/>
    </ligand>
</feature>
<feature type="binding site" evidence="1">
    <location>
        <position position="189"/>
    </location>
    <ligand>
        <name>S-adenosyl-L-methionine</name>
        <dbReference type="ChEBI" id="CHEBI:59789"/>
    </ligand>
</feature>
<feature type="binding site" evidence="1">
    <location>
        <position position="236"/>
    </location>
    <ligand>
        <name>S-adenosyl-L-methionine</name>
        <dbReference type="ChEBI" id="CHEBI:59789"/>
    </ligand>
</feature>
<organism>
    <name type="scientific">Acinetobacter baylyi (strain ATCC 33305 / BD413 / ADP1)</name>
    <dbReference type="NCBI Taxonomy" id="62977"/>
    <lineage>
        <taxon>Bacteria</taxon>
        <taxon>Pseudomonadati</taxon>
        <taxon>Pseudomonadota</taxon>
        <taxon>Gammaproteobacteria</taxon>
        <taxon>Moraxellales</taxon>
        <taxon>Moraxellaceae</taxon>
        <taxon>Acinetobacter</taxon>
    </lineage>
</organism>
<proteinExistence type="inferred from homology"/>
<gene>
    <name evidence="1" type="primary">prmA</name>
    <name type="ordered locus">ACIAD2443</name>
</gene>
<evidence type="ECO:0000255" key="1">
    <source>
        <dbReference type="HAMAP-Rule" id="MF_00735"/>
    </source>
</evidence>
<keyword id="KW-0963">Cytoplasm</keyword>
<keyword id="KW-0489">Methyltransferase</keyword>
<keyword id="KW-0949">S-adenosyl-L-methionine</keyword>
<keyword id="KW-0808">Transferase</keyword>
<accession>Q6F9P9</accession>
<protein>
    <recommendedName>
        <fullName evidence="1">Ribosomal protein L11 methyltransferase</fullName>
        <shortName evidence="1">L11 Mtase</shortName>
        <ecNumber evidence="1">2.1.1.-</ecNumber>
    </recommendedName>
</protein>